<comment type="similarity">
    <text evidence="1">Belongs to the bacterial ribosomal protein bL35 family.</text>
</comment>
<accession>A8A0R0</accession>
<dbReference type="EMBL" id="CP000802">
    <property type="protein sequence ID" value="ABV06114.1"/>
    <property type="molecule type" value="Genomic_DNA"/>
</dbReference>
<dbReference type="RefSeq" id="WP_001124225.1">
    <property type="nucleotide sequence ID" value="NC_009800.1"/>
</dbReference>
<dbReference type="SMR" id="A8A0R0"/>
<dbReference type="GeneID" id="97601348"/>
<dbReference type="KEGG" id="ecx:EcHS_A1798"/>
<dbReference type="HOGENOM" id="CLU_169643_1_1_6"/>
<dbReference type="GO" id="GO:0022625">
    <property type="term" value="C:cytosolic large ribosomal subunit"/>
    <property type="evidence" value="ECO:0007669"/>
    <property type="project" value="TreeGrafter"/>
</dbReference>
<dbReference type="GO" id="GO:0003735">
    <property type="term" value="F:structural constituent of ribosome"/>
    <property type="evidence" value="ECO:0007669"/>
    <property type="project" value="InterPro"/>
</dbReference>
<dbReference type="GO" id="GO:0006412">
    <property type="term" value="P:translation"/>
    <property type="evidence" value="ECO:0007669"/>
    <property type="project" value="UniProtKB-UniRule"/>
</dbReference>
<dbReference type="FunFam" id="4.10.410.60:FF:000001">
    <property type="entry name" value="50S ribosomal protein L35"/>
    <property type="match status" value="1"/>
</dbReference>
<dbReference type="Gene3D" id="4.10.410.60">
    <property type="match status" value="1"/>
</dbReference>
<dbReference type="HAMAP" id="MF_00514">
    <property type="entry name" value="Ribosomal_bL35"/>
    <property type="match status" value="1"/>
</dbReference>
<dbReference type="InterPro" id="IPR001706">
    <property type="entry name" value="Ribosomal_bL35"/>
</dbReference>
<dbReference type="InterPro" id="IPR021137">
    <property type="entry name" value="Ribosomal_bL35-like"/>
</dbReference>
<dbReference type="InterPro" id="IPR018265">
    <property type="entry name" value="Ribosomal_bL35_CS"/>
</dbReference>
<dbReference type="InterPro" id="IPR037229">
    <property type="entry name" value="Ribosomal_bL35_sf"/>
</dbReference>
<dbReference type="NCBIfam" id="TIGR00001">
    <property type="entry name" value="rpmI_bact"/>
    <property type="match status" value="1"/>
</dbReference>
<dbReference type="PANTHER" id="PTHR33343">
    <property type="entry name" value="54S RIBOSOMAL PROTEIN BL35M"/>
    <property type="match status" value="1"/>
</dbReference>
<dbReference type="PANTHER" id="PTHR33343:SF1">
    <property type="entry name" value="LARGE RIBOSOMAL SUBUNIT PROTEIN BL35M"/>
    <property type="match status" value="1"/>
</dbReference>
<dbReference type="Pfam" id="PF01632">
    <property type="entry name" value="Ribosomal_L35p"/>
    <property type="match status" value="1"/>
</dbReference>
<dbReference type="PRINTS" id="PR00064">
    <property type="entry name" value="RIBOSOMALL35"/>
</dbReference>
<dbReference type="SUPFAM" id="SSF143034">
    <property type="entry name" value="L35p-like"/>
    <property type="match status" value="1"/>
</dbReference>
<dbReference type="PROSITE" id="PS00936">
    <property type="entry name" value="RIBOSOMAL_L35"/>
    <property type="match status" value="1"/>
</dbReference>
<feature type="chain" id="PRO_1000060890" description="Large ribosomal subunit protein bL35">
    <location>
        <begin position="1"/>
        <end position="65"/>
    </location>
</feature>
<feature type="region of interest" description="Disordered" evidence="2">
    <location>
        <begin position="1"/>
        <end position="22"/>
    </location>
</feature>
<feature type="compositionally biased region" description="Basic residues" evidence="2">
    <location>
        <begin position="10"/>
        <end position="22"/>
    </location>
</feature>
<keyword id="KW-0687">Ribonucleoprotein</keyword>
<keyword id="KW-0689">Ribosomal protein</keyword>
<protein>
    <recommendedName>
        <fullName evidence="1">Large ribosomal subunit protein bL35</fullName>
    </recommendedName>
    <alternativeName>
        <fullName evidence="3">50S ribosomal protein L35</fullName>
    </alternativeName>
</protein>
<evidence type="ECO:0000255" key="1">
    <source>
        <dbReference type="HAMAP-Rule" id="MF_00514"/>
    </source>
</evidence>
<evidence type="ECO:0000256" key="2">
    <source>
        <dbReference type="SAM" id="MobiDB-lite"/>
    </source>
</evidence>
<evidence type="ECO:0000305" key="3"/>
<name>RL35_ECOHS</name>
<reference key="1">
    <citation type="journal article" date="2008" name="J. Bacteriol.">
        <title>The pangenome structure of Escherichia coli: comparative genomic analysis of E. coli commensal and pathogenic isolates.</title>
        <authorList>
            <person name="Rasko D.A."/>
            <person name="Rosovitz M.J."/>
            <person name="Myers G.S.A."/>
            <person name="Mongodin E.F."/>
            <person name="Fricke W.F."/>
            <person name="Gajer P."/>
            <person name="Crabtree J."/>
            <person name="Sebaihia M."/>
            <person name="Thomson N.R."/>
            <person name="Chaudhuri R."/>
            <person name="Henderson I.R."/>
            <person name="Sperandio V."/>
            <person name="Ravel J."/>
        </authorList>
    </citation>
    <scope>NUCLEOTIDE SEQUENCE [LARGE SCALE GENOMIC DNA]</scope>
    <source>
        <strain>HS</strain>
    </source>
</reference>
<gene>
    <name evidence="1" type="primary">rpmI</name>
    <name type="ordered locus">EcHS_A1798</name>
</gene>
<sequence length="65" mass="7289">MPKIKTVRGAAKRFKKTGKGGFKHKHANLRHILTKKATKRKRHLRPKAMVSKGDLGLVIACLPYA</sequence>
<organism>
    <name type="scientific">Escherichia coli O9:H4 (strain HS)</name>
    <dbReference type="NCBI Taxonomy" id="331112"/>
    <lineage>
        <taxon>Bacteria</taxon>
        <taxon>Pseudomonadati</taxon>
        <taxon>Pseudomonadota</taxon>
        <taxon>Gammaproteobacteria</taxon>
        <taxon>Enterobacterales</taxon>
        <taxon>Enterobacteriaceae</taxon>
        <taxon>Escherichia</taxon>
    </lineage>
</organism>
<proteinExistence type="inferred from homology"/>